<gene>
    <name evidence="1" type="primary">tig</name>
    <name type="ordered locus">BAV1496</name>
</gene>
<comment type="function">
    <text evidence="1">Involved in protein export. Acts as a chaperone by maintaining the newly synthesized protein in an open conformation. Functions as a peptidyl-prolyl cis-trans isomerase.</text>
</comment>
<comment type="catalytic activity">
    <reaction evidence="1">
        <text>[protein]-peptidylproline (omega=180) = [protein]-peptidylproline (omega=0)</text>
        <dbReference type="Rhea" id="RHEA:16237"/>
        <dbReference type="Rhea" id="RHEA-COMP:10747"/>
        <dbReference type="Rhea" id="RHEA-COMP:10748"/>
        <dbReference type="ChEBI" id="CHEBI:83833"/>
        <dbReference type="ChEBI" id="CHEBI:83834"/>
        <dbReference type="EC" id="5.2.1.8"/>
    </reaction>
</comment>
<comment type="subcellular location">
    <subcellularLocation>
        <location>Cytoplasm</location>
    </subcellularLocation>
    <text evidence="1">About half TF is bound to the ribosome near the polypeptide exit tunnel while the other half is free in the cytoplasm.</text>
</comment>
<comment type="domain">
    <text evidence="1">Consists of 3 domains; the N-terminus binds the ribosome, the middle domain has PPIase activity, while the C-terminus has intrinsic chaperone activity on its own.</text>
</comment>
<comment type="similarity">
    <text evidence="1">Belongs to the FKBP-type PPIase family. Tig subfamily.</text>
</comment>
<dbReference type="EC" id="5.2.1.8" evidence="1"/>
<dbReference type="EMBL" id="AM167904">
    <property type="protein sequence ID" value="CAJ49109.1"/>
    <property type="molecule type" value="Genomic_DNA"/>
</dbReference>
<dbReference type="RefSeq" id="WP_012417173.1">
    <property type="nucleotide sequence ID" value="NC_010645.1"/>
</dbReference>
<dbReference type="SMR" id="Q2L258"/>
<dbReference type="STRING" id="360910.BAV1496"/>
<dbReference type="GeneID" id="92935439"/>
<dbReference type="KEGG" id="bav:BAV1496"/>
<dbReference type="eggNOG" id="COG0544">
    <property type="taxonomic scope" value="Bacteria"/>
</dbReference>
<dbReference type="HOGENOM" id="CLU_033058_2_0_4"/>
<dbReference type="OrthoDB" id="9767721at2"/>
<dbReference type="Proteomes" id="UP000001977">
    <property type="component" value="Chromosome"/>
</dbReference>
<dbReference type="GO" id="GO:0005737">
    <property type="term" value="C:cytoplasm"/>
    <property type="evidence" value="ECO:0007669"/>
    <property type="project" value="UniProtKB-SubCell"/>
</dbReference>
<dbReference type="GO" id="GO:0003755">
    <property type="term" value="F:peptidyl-prolyl cis-trans isomerase activity"/>
    <property type="evidence" value="ECO:0007669"/>
    <property type="project" value="UniProtKB-UniRule"/>
</dbReference>
<dbReference type="GO" id="GO:0044183">
    <property type="term" value="F:protein folding chaperone"/>
    <property type="evidence" value="ECO:0007669"/>
    <property type="project" value="TreeGrafter"/>
</dbReference>
<dbReference type="GO" id="GO:0043022">
    <property type="term" value="F:ribosome binding"/>
    <property type="evidence" value="ECO:0007669"/>
    <property type="project" value="TreeGrafter"/>
</dbReference>
<dbReference type="GO" id="GO:0051083">
    <property type="term" value="P:'de novo' cotranslational protein folding"/>
    <property type="evidence" value="ECO:0007669"/>
    <property type="project" value="TreeGrafter"/>
</dbReference>
<dbReference type="GO" id="GO:0051301">
    <property type="term" value="P:cell division"/>
    <property type="evidence" value="ECO:0007669"/>
    <property type="project" value="UniProtKB-KW"/>
</dbReference>
<dbReference type="GO" id="GO:0061077">
    <property type="term" value="P:chaperone-mediated protein folding"/>
    <property type="evidence" value="ECO:0007669"/>
    <property type="project" value="TreeGrafter"/>
</dbReference>
<dbReference type="GO" id="GO:0015031">
    <property type="term" value="P:protein transport"/>
    <property type="evidence" value="ECO:0007669"/>
    <property type="project" value="UniProtKB-UniRule"/>
</dbReference>
<dbReference type="GO" id="GO:0043335">
    <property type="term" value="P:protein unfolding"/>
    <property type="evidence" value="ECO:0007669"/>
    <property type="project" value="TreeGrafter"/>
</dbReference>
<dbReference type="FunFam" id="3.10.50.40:FF:000001">
    <property type="entry name" value="Trigger factor"/>
    <property type="match status" value="1"/>
</dbReference>
<dbReference type="Gene3D" id="3.10.50.40">
    <property type="match status" value="1"/>
</dbReference>
<dbReference type="Gene3D" id="3.30.70.1050">
    <property type="entry name" value="Trigger factor ribosome-binding domain"/>
    <property type="match status" value="1"/>
</dbReference>
<dbReference type="Gene3D" id="1.10.3120.10">
    <property type="entry name" value="Trigger factor, C-terminal domain"/>
    <property type="match status" value="1"/>
</dbReference>
<dbReference type="HAMAP" id="MF_00303">
    <property type="entry name" value="Trigger_factor_Tig"/>
    <property type="match status" value="1"/>
</dbReference>
<dbReference type="InterPro" id="IPR046357">
    <property type="entry name" value="PPIase_dom_sf"/>
</dbReference>
<dbReference type="InterPro" id="IPR001179">
    <property type="entry name" value="PPIase_FKBP_dom"/>
</dbReference>
<dbReference type="InterPro" id="IPR005215">
    <property type="entry name" value="Trig_fac"/>
</dbReference>
<dbReference type="InterPro" id="IPR008880">
    <property type="entry name" value="Trigger_fac_C"/>
</dbReference>
<dbReference type="InterPro" id="IPR037041">
    <property type="entry name" value="Trigger_fac_C_sf"/>
</dbReference>
<dbReference type="InterPro" id="IPR008881">
    <property type="entry name" value="Trigger_fac_ribosome-bd_bac"/>
</dbReference>
<dbReference type="InterPro" id="IPR036611">
    <property type="entry name" value="Trigger_fac_ribosome-bd_sf"/>
</dbReference>
<dbReference type="InterPro" id="IPR027304">
    <property type="entry name" value="Trigger_fact/SurA_dom_sf"/>
</dbReference>
<dbReference type="NCBIfam" id="TIGR00115">
    <property type="entry name" value="tig"/>
    <property type="match status" value="1"/>
</dbReference>
<dbReference type="PANTHER" id="PTHR30560">
    <property type="entry name" value="TRIGGER FACTOR CHAPERONE AND PEPTIDYL-PROLYL CIS/TRANS ISOMERASE"/>
    <property type="match status" value="1"/>
</dbReference>
<dbReference type="PANTHER" id="PTHR30560:SF3">
    <property type="entry name" value="TRIGGER FACTOR-LIKE PROTEIN TIG, CHLOROPLASTIC"/>
    <property type="match status" value="1"/>
</dbReference>
<dbReference type="Pfam" id="PF00254">
    <property type="entry name" value="FKBP_C"/>
    <property type="match status" value="1"/>
</dbReference>
<dbReference type="Pfam" id="PF05698">
    <property type="entry name" value="Trigger_C"/>
    <property type="match status" value="1"/>
</dbReference>
<dbReference type="Pfam" id="PF05697">
    <property type="entry name" value="Trigger_N"/>
    <property type="match status" value="1"/>
</dbReference>
<dbReference type="PIRSF" id="PIRSF003095">
    <property type="entry name" value="Trigger_factor"/>
    <property type="match status" value="1"/>
</dbReference>
<dbReference type="SUPFAM" id="SSF54534">
    <property type="entry name" value="FKBP-like"/>
    <property type="match status" value="1"/>
</dbReference>
<dbReference type="SUPFAM" id="SSF109998">
    <property type="entry name" value="Triger factor/SurA peptide-binding domain-like"/>
    <property type="match status" value="1"/>
</dbReference>
<dbReference type="SUPFAM" id="SSF102735">
    <property type="entry name" value="Trigger factor ribosome-binding domain"/>
    <property type="match status" value="1"/>
</dbReference>
<dbReference type="PROSITE" id="PS50059">
    <property type="entry name" value="FKBP_PPIASE"/>
    <property type="match status" value="1"/>
</dbReference>
<accession>Q2L258</accession>
<proteinExistence type="inferred from homology"/>
<reference key="1">
    <citation type="journal article" date="2006" name="J. Bacteriol.">
        <title>Comparison of the genome sequence of the poultry pathogen Bordetella avium with those of B. bronchiseptica, B. pertussis, and B. parapertussis reveals extensive diversity in surface structures associated with host interaction.</title>
        <authorList>
            <person name="Sebaihia M."/>
            <person name="Preston A."/>
            <person name="Maskell D.J."/>
            <person name="Kuzmiak H."/>
            <person name="Connell T.D."/>
            <person name="King N.D."/>
            <person name="Orndorff P.E."/>
            <person name="Miyamoto D.M."/>
            <person name="Thomson N.R."/>
            <person name="Harris D."/>
            <person name="Goble A."/>
            <person name="Lord A."/>
            <person name="Murphy L."/>
            <person name="Quail M.A."/>
            <person name="Rutter S."/>
            <person name="Squares R."/>
            <person name="Squares S."/>
            <person name="Woodward J."/>
            <person name="Parkhill J."/>
            <person name="Temple L.M."/>
        </authorList>
    </citation>
    <scope>NUCLEOTIDE SEQUENCE [LARGE SCALE GENOMIC DNA]</scope>
    <source>
        <strain>197N</strain>
    </source>
</reference>
<feature type="chain" id="PRO_0000256531" description="Trigger factor">
    <location>
        <begin position="1"/>
        <end position="436"/>
    </location>
</feature>
<feature type="domain" description="PPIase FKBP-type" evidence="1">
    <location>
        <begin position="163"/>
        <end position="248"/>
    </location>
</feature>
<sequence>MQPVVETLSGLERRVDLAISVADVEKEVQAQLKRVARTAKVPGFRPGKAPMAMLERSHGPSVRYDVINSQVARAFEQAVEAAQLRVAGSPSLEPKTEGVDENTLAFSATFEVYPEVAVPDLSDLAVTRYETEVTDAEVDKTLDVLRKQRASYETREGRAAQDDDRIVLDFAGTIDGVPFEGGKAENFPFILGQGRMLPEFEEAARGLKAGDTKVFPLSFPEDYQGKEVAGKTAEFTITVKEVAEAVLPVVDAEFAKSLGQADADVEKLKADIRGNIEREVKVRSQGRTKTSVMDALVEAAKFDVPKSLVDNDVQGRIAQAREELKQRGVPNADSMPMPAEVFAVESERRVRLGLLVSELVKQQQLQAKPEQVRARIEEFAQNYEQPAQVVSYYLSDRQRRAEIEAIVLEDNVVAYVLEKAKVTDEKVPFDQLMGMA</sequence>
<name>TIG_BORA1</name>
<organism>
    <name type="scientific">Bordetella avium (strain 197N)</name>
    <dbReference type="NCBI Taxonomy" id="360910"/>
    <lineage>
        <taxon>Bacteria</taxon>
        <taxon>Pseudomonadati</taxon>
        <taxon>Pseudomonadota</taxon>
        <taxon>Betaproteobacteria</taxon>
        <taxon>Burkholderiales</taxon>
        <taxon>Alcaligenaceae</taxon>
        <taxon>Bordetella</taxon>
    </lineage>
</organism>
<keyword id="KW-0131">Cell cycle</keyword>
<keyword id="KW-0132">Cell division</keyword>
<keyword id="KW-0143">Chaperone</keyword>
<keyword id="KW-0963">Cytoplasm</keyword>
<keyword id="KW-0413">Isomerase</keyword>
<keyword id="KW-1185">Reference proteome</keyword>
<keyword id="KW-0697">Rotamase</keyword>
<protein>
    <recommendedName>
        <fullName evidence="1">Trigger factor</fullName>
        <shortName evidence="1">TF</shortName>
        <ecNumber evidence="1">5.2.1.8</ecNumber>
    </recommendedName>
    <alternativeName>
        <fullName evidence="1">PPIase</fullName>
    </alternativeName>
</protein>
<evidence type="ECO:0000255" key="1">
    <source>
        <dbReference type="HAMAP-Rule" id="MF_00303"/>
    </source>
</evidence>